<protein>
    <recommendedName>
        <fullName evidence="4">Paralithocin 2</fullName>
    </recommendedName>
    <alternativeName>
        <fullName evidence="2">P30</fullName>
    </alternativeName>
</protein>
<evidence type="ECO:0000269" key="1">
    <source>
    </source>
</evidence>
<evidence type="ECO:0000303" key="2">
    <source>
    </source>
</evidence>
<evidence type="ECO:0000305" key="3">
    <source>
    </source>
</evidence>
<evidence type="ECO:0000312" key="4">
    <source>
        <dbReference type="EMBL" id="AUT12058.1"/>
    </source>
</evidence>
<organism evidence="4">
    <name type="scientific">Paralithodes camtschaticus</name>
    <name type="common">Red king crab</name>
    <name type="synonym">Maja camtschatica</name>
    <dbReference type="NCBI Taxonomy" id="6741"/>
    <lineage>
        <taxon>Eukaryota</taxon>
        <taxon>Metazoa</taxon>
        <taxon>Ecdysozoa</taxon>
        <taxon>Arthropoda</taxon>
        <taxon>Crustacea</taxon>
        <taxon>Multicrustacea</taxon>
        <taxon>Malacostraca</taxon>
        <taxon>Eumalacostraca</taxon>
        <taxon>Eucarida</taxon>
        <taxon>Decapoda</taxon>
        <taxon>Pleocyemata</taxon>
        <taxon>Anomura</taxon>
        <taxon>Paguroidea</taxon>
        <taxon>Lithodidae</taxon>
        <taxon>Paralithodes</taxon>
    </lineage>
</organism>
<sequence>MGAAKVLLVVLAVMVAVPNLAEGRSPPQCQYTNCAAVLCPAVYCANAYTPPCGCCDICPPQKYGGGYRPRG</sequence>
<reference evidence="4" key="1">
    <citation type="journal article" date="2018" name="J. Nat. Prod.">
        <title>Paralithocins, Antimicrobial Peptides with Unusual Disulfide Connectivity from the Red King Crab, Paralithodes camtschaticus.</title>
        <authorList>
            <person name="Moe M.K."/>
            <person name="Haug T."/>
            <person name="Sydnes M.O."/>
            <person name="Sperstad S.V."/>
            <person name="Li C."/>
            <person name="Vaagsfjord L.C."/>
            <person name="de la Vega E."/>
            <person name="Stensvaag K."/>
        </authorList>
    </citation>
    <scope>NUCLEOTIDE SEQUENCE [MRNA]</scope>
    <scope>PROTEIN SEQUENCE OF 24-70</scope>
    <scope>FUNCTION</scope>
    <scope>MASS SPECTROMETRY</scope>
    <scope>AMIDATION AT ARG-70</scope>
    <scope>DISULFIDE BONDS</scope>
    <scope>IDENTIFICATION BY MASS SPECTROMETRY</scope>
    <source>
        <tissue evidence="2">Hemocyte</tissue>
    </source>
</reference>
<comment type="function">
    <text evidence="1">Has antibacterial activity, mainly against marine Gram-positive bacteria like C.maltaromaticum (MIC=50 uM), C.mobile (MIC=50 uM), C.divergens (MIC=50 uM) and C.funditum (MIC=25 uM) but also against C.glutamicum (MIC=12.5 uM). Has very little or no activity against Gram-negative bacteria.</text>
</comment>
<comment type="PTM">
    <text evidence="2">The amidated form is probably the active form.</text>
</comment>
<comment type="mass spectrometry">
    <text>Amidated.</text>
</comment>
<comment type="mass spectrometry">
    <text>Not amidated.</text>
</comment>
<comment type="similarity">
    <text evidence="3">Belongs to the paralithocin family.</text>
</comment>
<proteinExistence type="evidence at protein level"/>
<keyword id="KW-0027">Amidation</keyword>
<keyword id="KW-0044">Antibiotic</keyword>
<keyword id="KW-0929">Antimicrobial</keyword>
<keyword id="KW-0903">Direct protein sequencing</keyword>
<keyword id="KW-1015">Disulfide bond</keyword>
<keyword id="KW-0732">Signal</keyword>
<feature type="signal peptide" evidence="1">
    <location>
        <begin position="1"/>
        <end position="23"/>
    </location>
</feature>
<feature type="peptide" id="PRO_0000444207" description="Paralithocin 2" evidence="1">
    <location>
        <begin position="24"/>
        <end position="70"/>
    </location>
</feature>
<feature type="modified residue" description="Arginine amide; partial" evidence="1">
    <location>
        <position position="70"/>
    </location>
</feature>
<feature type="disulfide bond" evidence="1">
    <location>
        <begin position="29"/>
        <end position="58"/>
    </location>
</feature>
<feature type="disulfide bond" evidence="1">
    <location>
        <begin position="34"/>
        <end position="54"/>
    </location>
</feature>
<feature type="disulfide bond" evidence="1">
    <location>
        <begin position="39"/>
        <end position="52"/>
    </location>
</feature>
<feature type="disulfide bond" evidence="1">
    <location>
        <begin position="44"/>
        <end position="55"/>
    </location>
</feature>
<name>AMP2_PARCM</name>
<dbReference type="EMBL" id="MF919585">
    <property type="protein sequence ID" value="AUT12058.1"/>
    <property type="molecule type" value="mRNA"/>
</dbReference>
<dbReference type="GO" id="GO:0050830">
    <property type="term" value="P:defense response to Gram-positive bacterium"/>
    <property type="evidence" value="ECO:0000314"/>
    <property type="project" value="UniProtKB"/>
</dbReference>
<dbReference type="GO" id="GO:0031640">
    <property type="term" value="P:killing of cells of another organism"/>
    <property type="evidence" value="ECO:0000314"/>
    <property type="project" value="UniProtKB"/>
</dbReference>
<accession>A0A2I8B352</accession>